<name>Y3629_DESHD</name>
<comment type="subcellular location">
    <subcellularLocation>
        <location evidence="1">Cytoplasm</location>
    </subcellularLocation>
</comment>
<comment type="similarity">
    <text evidence="1">Belongs to the TACO1 family.</text>
</comment>
<proteinExistence type="inferred from homology"/>
<sequence length="252" mass="27844">MSGHSKWANIKHKKAKADAQKGKIFTKLGRELIVAARAGGGDPNNNFRLKIAIDNAKSANMPNDNIQRAIQKGVGGGEGESYEELRYEGYGPGGVAIMVDIMTDNRNRTAGEVRHIFSKHGGNLGETGCVNWMFTEKGQLMILKEDLKCDEDELMLLVLEAGAEDLQQDEESFVVYTAPGDMEAVRQALLDQGIAIEEAKINQVPQNTIEIADLEQAKKLVRMMELLEDHDDSQGVYANFEFADSIDEEELD</sequence>
<evidence type="ECO:0000255" key="1">
    <source>
        <dbReference type="HAMAP-Rule" id="MF_00693"/>
    </source>
</evidence>
<organism>
    <name type="scientific">Desulfitobacterium hafniense (strain DSM 10664 / DCB-2)</name>
    <dbReference type="NCBI Taxonomy" id="272564"/>
    <lineage>
        <taxon>Bacteria</taxon>
        <taxon>Bacillati</taxon>
        <taxon>Bacillota</taxon>
        <taxon>Clostridia</taxon>
        <taxon>Eubacteriales</taxon>
        <taxon>Desulfitobacteriaceae</taxon>
        <taxon>Desulfitobacterium</taxon>
    </lineage>
</organism>
<keyword id="KW-0963">Cytoplasm</keyword>
<keyword id="KW-0238">DNA-binding</keyword>
<keyword id="KW-0804">Transcription</keyword>
<keyword id="KW-0805">Transcription regulation</keyword>
<protein>
    <recommendedName>
        <fullName evidence="1">Probable transcriptional regulatory protein Dhaf_3629</fullName>
    </recommendedName>
</protein>
<feature type="chain" id="PRO_1000200093" description="Probable transcriptional regulatory protein Dhaf_3629">
    <location>
        <begin position="1"/>
        <end position="252"/>
    </location>
</feature>
<accession>B8FQV9</accession>
<reference key="1">
    <citation type="journal article" date="2012" name="BMC Microbiol.">
        <title>Genome sequence of Desulfitobacterium hafniense DCB-2, a Gram-positive anaerobe capable of dehalogenation and metal reduction.</title>
        <authorList>
            <person name="Kim S.H."/>
            <person name="Harzman C."/>
            <person name="Davis J.K."/>
            <person name="Hutcheson R."/>
            <person name="Broderick J.B."/>
            <person name="Marsh T.L."/>
            <person name="Tiedje J.M."/>
        </authorList>
    </citation>
    <scope>NUCLEOTIDE SEQUENCE [LARGE SCALE GENOMIC DNA]</scope>
    <source>
        <strain>DSM 10664 / DCB-2</strain>
    </source>
</reference>
<dbReference type="EMBL" id="CP001336">
    <property type="protein sequence ID" value="ACL21646.1"/>
    <property type="molecule type" value="Genomic_DNA"/>
</dbReference>
<dbReference type="RefSeq" id="WP_011460362.1">
    <property type="nucleotide sequence ID" value="NC_011830.1"/>
</dbReference>
<dbReference type="SMR" id="B8FQV9"/>
<dbReference type="KEGG" id="dhd:Dhaf_3629"/>
<dbReference type="HOGENOM" id="CLU_062974_2_2_9"/>
<dbReference type="Proteomes" id="UP000007726">
    <property type="component" value="Chromosome"/>
</dbReference>
<dbReference type="GO" id="GO:0005829">
    <property type="term" value="C:cytosol"/>
    <property type="evidence" value="ECO:0007669"/>
    <property type="project" value="TreeGrafter"/>
</dbReference>
<dbReference type="GO" id="GO:0003677">
    <property type="term" value="F:DNA binding"/>
    <property type="evidence" value="ECO:0007669"/>
    <property type="project" value="UniProtKB-UniRule"/>
</dbReference>
<dbReference type="GO" id="GO:0006355">
    <property type="term" value="P:regulation of DNA-templated transcription"/>
    <property type="evidence" value="ECO:0007669"/>
    <property type="project" value="UniProtKB-UniRule"/>
</dbReference>
<dbReference type="FunFam" id="1.10.10.200:FF:000002">
    <property type="entry name" value="Probable transcriptional regulatory protein CLM62_37755"/>
    <property type="match status" value="1"/>
</dbReference>
<dbReference type="Gene3D" id="1.10.10.200">
    <property type="match status" value="1"/>
</dbReference>
<dbReference type="Gene3D" id="3.30.70.980">
    <property type="match status" value="2"/>
</dbReference>
<dbReference type="HAMAP" id="MF_00693">
    <property type="entry name" value="Transcrip_reg_TACO1"/>
    <property type="match status" value="1"/>
</dbReference>
<dbReference type="InterPro" id="IPR017856">
    <property type="entry name" value="Integrase-like_N"/>
</dbReference>
<dbReference type="InterPro" id="IPR048300">
    <property type="entry name" value="TACO1_YebC-like_2nd/3rd_dom"/>
</dbReference>
<dbReference type="InterPro" id="IPR049083">
    <property type="entry name" value="TACO1_YebC_N"/>
</dbReference>
<dbReference type="InterPro" id="IPR002876">
    <property type="entry name" value="Transcrip_reg_TACO1-like"/>
</dbReference>
<dbReference type="InterPro" id="IPR026564">
    <property type="entry name" value="Transcrip_reg_TACO1-like_dom3"/>
</dbReference>
<dbReference type="InterPro" id="IPR029072">
    <property type="entry name" value="YebC-like"/>
</dbReference>
<dbReference type="NCBIfam" id="NF001030">
    <property type="entry name" value="PRK00110.1"/>
    <property type="match status" value="1"/>
</dbReference>
<dbReference type="NCBIfam" id="NF009044">
    <property type="entry name" value="PRK12378.1"/>
    <property type="match status" value="1"/>
</dbReference>
<dbReference type="NCBIfam" id="TIGR01033">
    <property type="entry name" value="YebC/PmpR family DNA-binding transcriptional regulator"/>
    <property type="match status" value="1"/>
</dbReference>
<dbReference type="PANTHER" id="PTHR12532:SF6">
    <property type="entry name" value="TRANSCRIPTIONAL REGULATORY PROTEIN YEBC-RELATED"/>
    <property type="match status" value="1"/>
</dbReference>
<dbReference type="PANTHER" id="PTHR12532">
    <property type="entry name" value="TRANSLATIONAL ACTIVATOR OF CYTOCHROME C OXIDASE 1"/>
    <property type="match status" value="1"/>
</dbReference>
<dbReference type="Pfam" id="PF20772">
    <property type="entry name" value="TACO1_YebC_N"/>
    <property type="match status" value="1"/>
</dbReference>
<dbReference type="Pfam" id="PF01709">
    <property type="entry name" value="Transcrip_reg"/>
    <property type="match status" value="1"/>
</dbReference>
<dbReference type="SUPFAM" id="SSF75625">
    <property type="entry name" value="YebC-like"/>
    <property type="match status" value="1"/>
</dbReference>
<gene>
    <name type="ordered locus">Dhaf_3629</name>
</gene>